<proteinExistence type="evidence at protein level"/>
<reference key="1">
    <citation type="journal article" date="2002" name="Biosci. Biotechnol. Biochem.">
        <title>A novel protein toxin from the deadly box jellyfish (Sea Wasp, Habu-kurage) Chiropsalmus quadrigatus.</title>
        <authorList>
            <person name="Nagai H."/>
            <person name="Takuwa-Kuroda K."/>
            <person name="Nakao M."/>
            <person name="Oshiro N."/>
            <person name="Iwanaga S."/>
            <person name="Nakajima T."/>
        </authorList>
    </citation>
    <scope>NUCLEOTIDE SEQUENCE [MRNA]</scope>
    <scope>TOXIC DOSE</scope>
    <scope>SUBCELLULAR LOCATION</scope>
    <source>
        <tissue>Nematoblast</tissue>
    </source>
</reference>
<reference key="2">
    <citation type="journal article" date="2015" name="Int. Arch. Allergy Immunol.">
        <title>Identification of allergens in the box jellyfish Chironex yamaguchii that cause sting dermatitis.</title>
        <authorList>
            <person name="Horiike T."/>
            <person name="Nagai H."/>
            <person name="Kitani S."/>
        </authorList>
    </citation>
    <scope>SUBCELLULAR LOCATION</scope>
    <scope>PROBABLE GLYCOSYLATION AT ASN-174</scope>
</reference>
<accession>P58762</accession>
<feature type="signal peptide" evidence="3">
    <location>
        <begin position="1"/>
        <end position="19"/>
    </location>
</feature>
<feature type="chain" id="PRO_0000035176" description="Toxin CqTX-A">
    <location>
        <begin position="20"/>
        <end position="462"/>
    </location>
</feature>
<feature type="glycosylation site" description="N-linked (GlcNAc...) asparagine" evidence="4 9">
    <location>
        <position position="174"/>
    </location>
</feature>
<organism>
    <name type="scientific">Chiropsoides quadrigatus</name>
    <name type="common">Box jellyfish</name>
    <name type="synonym">Chiropsalmus quadrigatus</name>
    <dbReference type="NCBI Taxonomy" id="130731"/>
    <lineage>
        <taxon>Eukaryota</taxon>
        <taxon>Metazoa</taxon>
        <taxon>Cnidaria</taxon>
        <taxon>Cubozoa</taxon>
        <taxon>Chirodropida</taxon>
        <taxon>Chiropsalmidae</taxon>
        <taxon>Chiropsoides</taxon>
    </lineage>
</organism>
<sequence length="462" mass="51802">MANMLYFSLLALLFMTGIASEGTISSGLASLKAKIDAKRPSGKQLFDKVANMQKQIEEKFSNDDERAKVMGAIGSLSTAVGKFQSGDPAKIASGCLDILVGISSVLKDFAKFSPIFSILSMVVGLFSGTKAEESVGSVVKKVVQEQSDQELQEALYGVKREYAVSKAFLDGVRNETSDLSPTEVSALGANVPVYQGVRFIAMVVQRIKNRKPRTESEIKRVLSMLELFTDLCSLRDLILLDLYQLVATPGHSPNIASGIKEVSNLGREEYKKVFEDLLKTNDKETYLFLSYLYPRERNEQSQKIFKFFDLMKVKYDDRLKQDLTGIQVFSSLHWPNYFLCSSKDYLALICTKPYGSLRLDKLNDGFYSIKTTQSNPKVCHRYGEYILFTHDRNDDLEKFNFVPVKLGERKIYLLSSKASPNKFAYVPKTAKGDLFFVDGIPSQLGYGNQGYFTLATDENEQT</sequence>
<keyword id="KW-0020">Allergen</keyword>
<keyword id="KW-0204">Cytolysis</keyword>
<keyword id="KW-1015">Disulfide bond</keyword>
<keyword id="KW-0325">Glycoprotein</keyword>
<keyword id="KW-0354">Hemolysis</keyword>
<keyword id="KW-0406">Ion transport</keyword>
<keyword id="KW-0472">Membrane</keyword>
<keyword id="KW-0166">Nematocyst</keyword>
<keyword id="KW-0964">Secreted</keyword>
<keyword id="KW-0732">Signal</keyword>
<keyword id="KW-1052">Target cell membrane</keyword>
<keyword id="KW-1053">Target membrane</keyword>
<keyword id="KW-0800">Toxin</keyword>
<keyword id="KW-0812">Transmembrane</keyword>
<keyword id="KW-0813">Transport</keyword>
<protein>
    <recommendedName>
        <fullName evidence="7">Toxin CqTX-A</fullName>
        <shortName>CQT-A</shortName>
        <shortName evidence="7">Toxin A</shortName>
    </recommendedName>
</protein>
<evidence type="ECO:0000250" key="1"/>
<evidence type="ECO:0000250" key="2">
    <source>
        <dbReference type="UniProtKB" id="Q9GV72"/>
    </source>
</evidence>
<evidence type="ECO:0000255" key="3"/>
<evidence type="ECO:0000255" key="4">
    <source>
        <dbReference type="PROSITE-ProRule" id="PRU00498"/>
    </source>
</evidence>
<evidence type="ECO:0000269" key="5">
    <source>
    </source>
</evidence>
<evidence type="ECO:0000269" key="6">
    <source>
    </source>
</evidence>
<evidence type="ECO:0000303" key="7">
    <source>
    </source>
</evidence>
<evidence type="ECO:0000305" key="8"/>
<evidence type="ECO:0000305" key="9">
    <source>
    </source>
</evidence>
<name>JTX1A_CHIQU</name>
<dbReference type="EMBL" id="AB045319">
    <property type="protein sequence ID" value="BAB82520.1"/>
    <property type="molecule type" value="mRNA"/>
</dbReference>
<dbReference type="PIR" id="JC7805">
    <property type="entry name" value="JC7805"/>
</dbReference>
<dbReference type="iPTMnet" id="P58762"/>
<dbReference type="GO" id="GO:0005576">
    <property type="term" value="C:extracellular region"/>
    <property type="evidence" value="ECO:0007669"/>
    <property type="project" value="UniProtKB-SubCell"/>
</dbReference>
<dbReference type="GO" id="GO:0016020">
    <property type="term" value="C:membrane"/>
    <property type="evidence" value="ECO:0007669"/>
    <property type="project" value="UniProtKB-KW"/>
</dbReference>
<dbReference type="GO" id="GO:0042151">
    <property type="term" value="C:nematocyst"/>
    <property type="evidence" value="ECO:0007669"/>
    <property type="project" value="UniProtKB-SubCell"/>
</dbReference>
<dbReference type="GO" id="GO:0044218">
    <property type="term" value="C:other organism cell membrane"/>
    <property type="evidence" value="ECO:0007669"/>
    <property type="project" value="UniProtKB-KW"/>
</dbReference>
<dbReference type="GO" id="GO:0090729">
    <property type="term" value="F:toxin activity"/>
    <property type="evidence" value="ECO:0007669"/>
    <property type="project" value="UniProtKB-KW"/>
</dbReference>
<dbReference type="GO" id="GO:0031640">
    <property type="term" value="P:killing of cells of another organism"/>
    <property type="evidence" value="ECO:0007669"/>
    <property type="project" value="UniProtKB-KW"/>
</dbReference>
<dbReference type="GO" id="GO:0006811">
    <property type="term" value="P:monoatomic ion transport"/>
    <property type="evidence" value="ECO:0007669"/>
    <property type="project" value="UniProtKB-KW"/>
</dbReference>
<comment type="function">
    <text evidence="2 5 6">Critical allergen and main toxic protein of C.quadrigatus venom (PubMed:26201970). Has potent hemolytic activity (PubMed:11866126). Is lethal to crayfish (PubMed:11866126). Causes cutaneous inflammation in humans (PubMed:26201970). May act as a pore-forming toxin, disrupting normal transmembrane ion concentration gradients in susceptible cells (By similarity).</text>
</comment>
<comment type="biophysicochemical properties">
    <temperatureDependence>
        <text evidence="6">Heat-stable protein that continues to cause erythematous skin eruption in the patient and to recognize IgE after heating.</text>
    </temperatureDependence>
</comment>
<comment type="subcellular location">
    <subcellularLocation>
        <location evidence="5 6">Secreted</location>
    </subcellularLocation>
    <subcellularLocation>
        <location evidence="5 6">Nematocyst</location>
    </subcellularLocation>
    <subcellularLocation>
        <location evidence="1">Target cell membrane</location>
    </subcellularLocation>
    <text evidence="1">Forms a membrane channel in the prey.</text>
</comment>
<comment type="PTM">
    <text evidence="8">Contains disulfide bonds.</text>
</comment>
<comment type="PTM">
    <text evidence="6">N-glycosylated.</text>
</comment>
<comment type="allergen">
    <text evidence="6">Causes an allergic reaction in human. Binds to IgE and IgG(4).</text>
</comment>
<comment type="toxic dose">
    <text evidence="5">LD(50) is 80 ug/kg by intraperitoneal injection into crayfish.</text>
</comment>
<comment type="similarity">
    <text evidence="8">Belongs to the jellyfish toxin family. Type I subfamily.</text>
</comment>